<dbReference type="EMBL" id="CP000578">
    <property type="protein sequence ID" value="ABN79015.1"/>
    <property type="molecule type" value="Genomic_DNA"/>
</dbReference>
<dbReference type="RefSeq" id="WP_011842756.1">
    <property type="nucleotide sequence ID" value="NC_009050.1"/>
</dbReference>
<dbReference type="SMR" id="A3PRP9"/>
<dbReference type="KEGG" id="rsh:Rsph17029_3937"/>
<dbReference type="HOGENOM" id="CLU_150721_1_0_5"/>
<dbReference type="Gene3D" id="3.10.20.280">
    <property type="entry name" value="RnfH-like"/>
    <property type="match status" value="1"/>
</dbReference>
<dbReference type="HAMAP" id="MF_00460">
    <property type="entry name" value="UPF0125_RnfH"/>
    <property type="match status" value="1"/>
</dbReference>
<dbReference type="InterPro" id="IPR016155">
    <property type="entry name" value="Mopterin_synth/thiamin_S_b"/>
</dbReference>
<dbReference type="InterPro" id="IPR005346">
    <property type="entry name" value="RnfH"/>
</dbReference>
<dbReference type="InterPro" id="IPR037021">
    <property type="entry name" value="RnfH_sf"/>
</dbReference>
<dbReference type="PANTHER" id="PTHR37483">
    <property type="entry name" value="UPF0125 PROTEIN RATB"/>
    <property type="match status" value="1"/>
</dbReference>
<dbReference type="PANTHER" id="PTHR37483:SF1">
    <property type="entry name" value="UPF0125 PROTEIN RATB"/>
    <property type="match status" value="1"/>
</dbReference>
<dbReference type="Pfam" id="PF03658">
    <property type="entry name" value="Ub-RnfH"/>
    <property type="match status" value="1"/>
</dbReference>
<dbReference type="SUPFAM" id="SSF54285">
    <property type="entry name" value="MoaD/ThiS"/>
    <property type="match status" value="1"/>
</dbReference>
<proteinExistence type="inferred from homology"/>
<protein>
    <recommendedName>
        <fullName evidence="1">Protein RnfH</fullName>
    </recommendedName>
</protein>
<name>RNFH_CERS1</name>
<accession>A3PRP9</accession>
<reference key="1">
    <citation type="submission" date="2007-02" db="EMBL/GenBank/DDBJ databases">
        <title>Complete sequence of chromosome 2 of Rhodobacter sphaeroides ATCC 17029.</title>
        <authorList>
            <person name="Copeland A."/>
            <person name="Lucas S."/>
            <person name="Lapidus A."/>
            <person name="Barry K."/>
            <person name="Detter J.C."/>
            <person name="Glavina del Rio T."/>
            <person name="Hammon N."/>
            <person name="Israni S."/>
            <person name="Dalin E."/>
            <person name="Tice H."/>
            <person name="Pitluck S."/>
            <person name="Kiss H."/>
            <person name="Brettin T."/>
            <person name="Bruce D."/>
            <person name="Han C."/>
            <person name="Tapia R."/>
            <person name="Gilna P."/>
            <person name="Schmutz J."/>
            <person name="Larimer F."/>
            <person name="Land M."/>
            <person name="Hauser L."/>
            <person name="Kyrpides N."/>
            <person name="Mikhailova N."/>
            <person name="Richardson P."/>
            <person name="Mackenzie C."/>
            <person name="Choudhary M."/>
            <person name="Donohue T.J."/>
            <person name="Kaplan S."/>
        </authorList>
    </citation>
    <scope>NUCLEOTIDE SEQUENCE [LARGE SCALE GENOMIC DNA]</scope>
    <source>
        <strain>ATCC 17029 / ATH 2.4.9</strain>
    </source>
</reference>
<evidence type="ECO:0000255" key="1">
    <source>
        <dbReference type="HAMAP-Rule" id="MF_00460"/>
    </source>
</evidence>
<comment type="similarity">
    <text evidence="1">Belongs to the UPF0125 (RnfH) family.</text>
</comment>
<organism>
    <name type="scientific">Cereibacter sphaeroides (strain ATCC 17029 / ATH 2.4.9)</name>
    <name type="common">Rhodobacter sphaeroides</name>
    <dbReference type="NCBI Taxonomy" id="349101"/>
    <lineage>
        <taxon>Bacteria</taxon>
        <taxon>Pseudomonadati</taxon>
        <taxon>Pseudomonadota</taxon>
        <taxon>Alphaproteobacteria</taxon>
        <taxon>Rhodobacterales</taxon>
        <taxon>Paracoccaceae</taxon>
        <taxon>Cereibacter</taxon>
    </lineage>
</organism>
<sequence length="85" mass="9481">MIVGVAYAKPTVQVWKHVDVPEGTSAREAIERSGLLAQFPEIDLEVNKVGIFGAICPLDRTLAEGDRVEIYRPIHPEAELLEKKR</sequence>
<gene>
    <name evidence="1" type="primary">rnfH</name>
    <name type="ordered locus">Rsph17029_3937</name>
</gene>
<feature type="chain" id="PRO_1000013592" description="Protein RnfH">
    <location>
        <begin position="1"/>
        <end position="85"/>
    </location>
</feature>